<sequence length="466" mass="50626">MSATQDYIVADIGLADFGRKEIAIAETEMPGLMACREEFGASKPLKGARITGSLHMTIQTAVLIETLVALGAEVRWASCNIFSTQDHAAAAIAASGVPVFAVKGETLEEYWTYTDKIFQWADGGVSNMILDDGGDATMYILLGARAEAGENILTNPGSEEEEILFAQIKKRLAATPGWFTRQRDAIKGVTEETTTGVNRLYQLQAKGLLPFPAINVNDSVTKSKFDNKYGCKESLVDGIRRGTDVMMAGKVAVVCGYGDVGKGSAASLSGAGARVKVTEVDPICALQAAMDGYEVVQLEDVVSSADIFITTTGNKDVIRIEHMRAMKDMAIVGNIGHFDNEIQVSALRNLKWTNVKPQVDLIEFPKGNRIILLSEGRLLNLGNATGHPSFVMSASFSNQVLAQIELFTKGEQYKNEVYVLPKQLDEKVARLHLAKLGAKLTELSEEQASYIGVKQQGPFKAEHYRY</sequence>
<gene>
    <name evidence="1" type="primary">ahcY</name>
    <name type="ordered locus">R00039</name>
    <name type="ORF">SMc02755</name>
</gene>
<proteinExistence type="inferred from homology"/>
<feature type="chain" id="PRO_0000116981" description="Adenosylhomocysteinase">
    <location>
        <begin position="1"/>
        <end position="466"/>
    </location>
</feature>
<feature type="binding site" evidence="1">
    <location>
        <position position="57"/>
    </location>
    <ligand>
        <name>substrate</name>
    </ligand>
</feature>
<feature type="binding site" evidence="1">
    <location>
        <position position="132"/>
    </location>
    <ligand>
        <name>substrate</name>
    </ligand>
</feature>
<feature type="binding site" evidence="1">
    <location>
        <position position="192"/>
    </location>
    <ligand>
        <name>substrate</name>
    </ligand>
</feature>
<feature type="binding site" evidence="1">
    <location>
        <begin position="193"/>
        <end position="195"/>
    </location>
    <ligand>
        <name>NAD(+)</name>
        <dbReference type="ChEBI" id="CHEBI:57540"/>
    </ligand>
</feature>
<feature type="binding site" evidence="1">
    <location>
        <position position="222"/>
    </location>
    <ligand>
        <name>substrate</name>
    </ligand>
</feature>
<feature type="binding site" evidence="1">
    <location>
        <position position="226"/>
    </location>
    <ligand>
        <name>substrate</name>
    </ligand>
</feature>
<feature type="binding site" evidence="1">
    <location>
        <position position="227"/>
    </location>
    <ligand>
        <name>NAD(+)</name>
        <dbReference type="ChEBI" id="CHEBI:57540"/>
    </ligand>
</feature>
<feature type="binding site" evidence="1">
    <location>
        <begin position="256"/>
        <end position="261"/>
    </location>
    <ligand>
        <name>NAD(+)</name>
        <dbReference type="ChEBI" id="CHEBI:57540"/>
    </ligand>
</feature>
<feature type="binding site" evidence="1">
    <location>
        <position position="279"/>
    </location>
    <ligand>
        <name>NAD(+)</name>
        <dbReference type="ChEBI" id="CHEBI:57540"/>
    </ligand>
</feature>
<feature type="binding site" evidence="1">
    <location>
        <position position="314"/>
    </location>
    <ligand>
        <name>NAD(+)</name>
        <dbReference type="ChEBI" id="CHEBI:57540"/>
    </ligand>
</feature>
<feature type="binding site" evidence="1">
    <location>
        <begin position="335"/>
        <end position="337"/>
    </location>
    <ligand>
        <name>NAD(+)</name>
        <dbReference type="ChEBI" id="CHEBI:57540"/>
    </ligand>
</feature>
<feature type="binding site" evidence="1">
    <location>
        <position position="380"/>
    </location>
    <ligand>
        <name>NAD(+)</name>
        <dbReference type="ChEBI" id="CHEBI:57540"/>
    </ligand>
</feature>
<keyword id="KW-0963">Cytoplasm</keyword>
<keyword id="KW-0378">Hydrolase</keyword>
<keyword id="KW-0520">NAD</keyword>
<keyword id="KW-0554">One-carbon metabolism</keyword>
<keyword id="KW-1185">Reference proteome</keyword>
<name>SAHH_RHIME</name>
<reference key="1">
    <citation type="journal article" date="2001" name="Proc. Natl. Acad. Sci. U.S.A.">
        <title>Analysis of the chromosome sequence of the legume symbiont Sinorhizobium meliloti strain 1021.</title>
        <authorList>
            <person name="Capela D."/>
            <person name="Barloy-Hubler F."/>
            <person name="Gouzy J."/>
            <person name="Bothe G."/>
            <person name="Ampe F."/>
            <person name="Batut J."/>
            <person name="Boistard P."/>
            <person name="Becker A."/>
            <person name="Boutry M."/>
            <person name="Cadieu E."/>
            <person name="Dreano S."/>
            <person name="Gloux S."/>
            <person name="Godrie T."/>
            <person name="Goffeau A."/>
            <person name="Kahn D."/>
            <person name="Kiss E."/>
            <person name="Lelaure V."/>
            <person name="Masuy D."/>
            <person name="Pohl T."/>
            <person name="Portetelle D."/>
            <person name="Puehler A."/>
            <person name="Purnelle B."/>
            <person name="Ramsperger U."/>
            <person name="Renard C."/>
            <person name="Thebault P."/>
            <person name="Vandenbol M."/>
            <person name="Weidner S."/>
            <person name="Galibert F."/>
        </authorList>
    </citation>
    <scope>NUCLEOTIDE SEQUENCE [LARGE SCALE GENOMIC DNA]</scope>
    <source>
        <strain>1021</strain>
    </source>
</reference>
<reference key="2">
    <citation type="journal article" date="2001" name="Science">
        <title>The composite genome of the legume symbiont Sinorhizobium meliloti.</title>
        <authorList>
            <person name="Galibert F."/>
            <person name="Finan T.M."/>
            <person name="Long S.R."/>
            <person name="Puehler A."/>
            <person name="Abola P."/>
            <person name="Ampe F."/>
            <person name="Barloy-Hubler F."/>
            <person name="Barnett M.J."/>
            <person name="Becker A."/>
            <person name="Boistard P."/>
            <person name="Bothe G."/>
            <person name="Boutry M."/>
            <person name="Bowser L."/>
            <person name="Buhrmester J."/>
            <person name="Cadieu E."/>
            <person name="Capela D."/>
            <person name="Chain P."/>
            <person name="Cowie A."/>
            <person name="Davis R.W."/>
            <person name="Dreano S."/>
            <person name="Federspiel N.A."/>
            <person name="Fisher R.F."/>
            <person name="Gloux S."/>
            <person name="Godrie T."/>
            <person name="Goffeau A."/>
            <person name="Golding B."/>
            <person name="Gouzy J."/>
            <person name="Gurjal M."/>
            <person name="Hernandez-Lucas I."/>
            <person name="Hong A."/>
            <person name="Huizar L."/>
            <person name="Hyman R.W."/>
            <person name="Jones T."/>
            <person name="Kahn D."/>
            <person name="Kahn M.L."/>
            <person name="Kalman S."/>
            <person name="Keating D.H."/>
            <person name="Kiss E."/>
            <person name="Komp C."/>
            <person name="Lelaure V."/>
            <person name="Masuy D."/>
            <person name="Palm C."/>
            <person name="Peck M.C."/>
            <person name="Pohl T.M."/>
            <person name="Portetelle D."/>
            <person name="Purnelle B."/>
            <person name="Ramsperger U."/>
            <person name="Surzycki R."/>
            <person name="Thebault P."/>
            <person name="Vandenbol M."/>
            <person name="Vorhoelter F.J."/>
            <person name="Weidner S."/>
            <person name="Wells D.H."/>
            <person name="Wong K."/>
            <person name="Yeh K.-C."/>
            <person name="Batut J."/>
        </authorList>
    </citation>
    <scope>NUCLEOTIDE SEQUENCE [LARGE SCALE GENOMIC DNA]</scope>
    <source>
        <strain>1021</strain>
    </source>
</reference>
<dbReference type="EC" id="3.13.2.1" evidence="1"/>
<dbReference type="EMBL" id="AL591688">
    <property type="protein sequence ID" value="CAC41426.1"/>
    <property type="molecule type" value="Genomic_DNA"/>
</dbReference>
<dbReference type="RefSeq" id="NP_384145.1">
    <property type="nucleotide sequence ID" value="NC_003047.1"/>
</dbReference>
<dbReference type="RefSeq" id="WP_003532016.1">
    <property type="nucleotide sequence ID" value="NC_003047.1"/>
</dbReference>
<dbReference type="SMR" id="Q92TC1"/>
<dbReference type="EnsemblBacteria" id="CAC41426">
    <property type="protein sequence ID" value="CAC41426"/>
    <property type="gene ID" value="SMc02755"/>
</dbReference>
<dbReference type="GeneID" id="89574355"/>
<dbReference type="KEGG" id="sme:SMc02755"/>
<dbReference type="PATRIC" id="fig|266834.11.peg.1393"/>
<dbReference type="eggNOG" id="COG0499">
    <property type="taxonomic scope" value="Bacteria"/>
</dbReference>
<dbReference type="HOGENOM" id="CLU_025194_2_1_5"/>
<dbReference type="OrthoDB" id="9802717at2"/>
<dbReference type="UniPathway" id="UPA00314">
    <property type="reaction ID" value="UER00076"/>
</dbReference>
<dbReference type="Proteomes" id="UP000001976">
    <property type="component" value="Chromosome"/>
</dbReference>
<dbReference type="GO" id="GO:0005829">
    <property type="term" value="C:cytosol"/>
    <property type="evidence" value="ECO:0007669"/>
    <property type="project" value="TreeGrafter"/>
</dbReference>
<dbReference type="GO" id="GO:0004013">
    <property type="term" value="F:adenosylhomocysteinase activity"/>
    <property type="evidence" value="ECO:0007669"/>
    <property type="project" value="UniProtKB-UniRule"/>
</dbReference>
<dbReference type="GO" id="GO:0071269">
    <property type="term" value="P:L-homocysteine biosynthetic process"/>
    <property type="evidence" value="ECO:0007669"/>
    <property type="project" value="UniProtKB-UniRule"/>
</dbReference>
<dbReference type="GO" id="GO:0006730">
    <property type="term" value="P:one-carbon metabolic process"/>
    <property type="evidence" value="ECO:0007669"/>
    <property type="project" value="UniProtKB-KW"/>
</dbReference>
<dbReference type="GO" id="GO:0033353">
    <property type="term" value="P:S-adenosylmethionine cycle"/>
    <property type="evidence" value="ECO:0007669"/>
    <property type="project" value="TreeGrafter"/>
</dbReference>
<dbReference type="CDD" id="cd00401">
    <property type="entry name" value="SAHH"/>
    <property type="match status" value="1"/>
</dbReference>
<dbReference type="FunFam" id="3.40.50.720:FF:000004">
    <property type="entry name" value="Adenosylhomocysteinase"/>
    <property type="match status" value="1"/>
</dbReference>
<dbReference type="Gene3D" id="3.40.50.1480">
    <property type="entry name" value="Adenosylhomocysteinase-like"/>
    <property type="match status" value="1"/>
</dbReference>
<dbReference type="Gene3D" id="3.40.50.720">
    <property type="entry name" value="NAD(P)-binding Rossmann-like Domain"/>
    <property type="match status" value="1"/>
</dbReference>
<dbReference type="HAMAP" id="MF_00563">
    <property type="entry name" value="AdoHcyase"/>
    <property type="match status" value="1"/>
</dbReference>
<dbReference type="InterPro" id="IPR042172">
    <property type="entry name" value="Adenosylhomocyst_ase-like_sf"/>
</dbReference>
<dbReference type="InterPro" id="IPR000043">
    <property type="entry name" value="Adenosylhomocysteinase-like"/>
</dbReference>
<dbReference type="InterPro" id="IPR015878">
    <property type="entry name" value="Ado_hCys_hydrolase_NAD-bd"/>
</dbReference>
<dbReference type="InterPro" id="IPR036291">
    <property type="entry name" value="NAD(P)-bd_dom_sf"/>
</dbReference>
<dbReference type="InterPro" id="IPR020082">
    <property type="entry name" value="S-Ado-L-homoCys_hydrolase_CS"/>
</dbReference>
<dbReference type="NCBIfam" id="TIGR00936">
    <property type="entry name" value="ahcY"/>
    <property type="match status" value="1"/>
</dbReference>
<dbReference type="NCBIfam" id="NF004005">
    <property type="entry name" value="PRK05476.2-3"/>
    <property type="match status" value="1"/>
</dbReference>
<dbReference type="PANTHER" id="PTHR23420">
    <property type="entry name" value="ADENOSYLHOMOCYSTEINASE"/>
    <property type="match status" value="1"/>
</dbReference>
<dbReference type="PANTHER" id="PTHR23420:SF0">
    <property type="entry name" value="ADENOSYLHOMOCYSTEINASE"/>
    <property type="match status" value="1"/>
</dbReference>
<dbReference type="Pfam" id="PF05221">
    <property type="entry name" value="AdoHcyase"/>
    <property type="match status" value="1"/>
</dbReference>
<dbReference type="Pfam" id="PF00670">
    <property type="entry name" value="AdoHcyase_NAD"/>
    <property type="match status" value="1"/>
</dbReference>
<dbReference type="PIRSF" id="PIRSF001109">
    <property type="entry name" value="Ad_hcy_hydrolase"/>
    <property type="match status" value="1"/>
</dbReference>
<dbReference type="SMART" id="SM00996">
    <property type="entry name" value="AdoHcyase"/>
    <property type="match status" value="1"/>
</dbReference>
<dbReference type="SMART" id="SM00997">
    <property type="entry name" value="AdoHcyase_NAD"/>
    <property type="match status" value="1"/>
</dbReference>
<dbReference type="SUPFAM" id="SSF52283">
    <property type="entry name" value="Formate/glycerate dehydrogenase catalytic domain-like"/>
    <property type="match status" value="1"/>
</dbReference>
<dbReference type="SUPFAM" id="SSF51735">
    <property type="entry name" value="NAD(P)-binding Rossmann-fold domains"/>
    <property type="match status" value="1"/>
</dbReference>
<dbReference type="PROSITE" id="PS00738">
    <property type="entry name" value="ADOHCYASE_1"/>
    <property type="match status" value="1"/>
</dbReference>
<dbReference type="PROSITE" id="PS00739">
    <property type="entry name" value="ADOHCYASE_2"/>
    <property type="match status" value="1"/>
</dbReference>
<comment type="function">
    <text evidence="1">May play a key role in the regulation of the intracellular concentration of adenosylhomocysteine.</text>
</comment>
<comment type="catalytic activity">
    <reaction evidence="1">
        <text>S-adenosyl-L-homocysteine + H2O = L-homocysteine + adenosine</text>
        <dbReference type="Rhea" id="RHEA:21708"/>
        <dbReference type="ChEBI" id="CHEBI:15377"/>
        <dbReference type="ChEBI" id="CHEBI:16335"/>
        <dbReference type="ChEBI" id="CHEBI:57856"/>
        <dbReference type="ChEBI" id="CHEBI:58199"/>
        <dbReference type="EC" id="3.13.2.1"/>
    </reaction>
</comment>
<comment type="cofactor">
    <cofactor evidence="1">
        <name>NAD(+)</name>
        <dbReference type="ChEBI" id="CHEBI:57540"/>
    </cofactor>
    <text evidence="1">Binds 1 NAD(+) per subunit.</text>
</comment>
<comment type="pathway">
    <text evidence="1">Amino-acid biosynthesis; L-homocysteine biosynthesis; L-homocysteine from S-adenosyl-L-homocysteine: step 1/1.</text>
</comment>
<comment type="subcellular location">
    <subcellularLocation>
        <location evidence="1">Cytoplasm</location>
    </subcellularLocation>
</comment>
<comment type="similarity">
    <text evidence="1">Belongs to the adenosylhomocysteinase family.</text>
</comment>
<accession>Q92TC1</accession>
<organism>
    <name type="scientific">Rhizobium meliloti (strain 1021)</name>
    <name type="common">Ensifer meliloti</name>
    <name type="synonym">Sinorhizobium meliloti</name>
    <dbReference type="NCBI Taxonomy" id="266834"/>
    <lineage>
        <taxon>Bacteria</taxon>
        <taxon>Pseudomonadati</taxon>
        <taxon>Pseudomonadota</taxon>
        <taxon>Alphaproteobacteria</taxon>
        <taxon>Hyphomicrobiales</taxon>
        <taxon>Rhizobiaceae</taxon>
        <taxon>Sinorhizobium/Ensifer group</taxon>
        <taxon>Sinorhizobium</taxon>
    </lineage>
</organism>
<protein>
    <recommendedName>
        <fullName evidence="1">Adenosylhomocysteinase</fullName>
        <ecNumber evidence="1">3.13.2.1</ecNumber>
    </recommendedName>
    <alternativeName>
        <fullName evidence="1">S-adenosyl-L-homocysteine hydrolase</fullName>
        <shortName evidence="1">AdoHcyase</shortName>
    </alternativeName>
</protein>
<evidence type="ECO:0000255" key="1">
    <source>
        <dbReference type="HAMAP-Rule" id="MF_00563"/>
    </source>
</evidence>